<comment type="similarity">
    <text evidence="1">Belongs to the bacterial ribosomal protein bL34 family.</text>
</comment>
<gene>
    <name evidence="1" type="primary">rpmH</name>
    <name type="ordered locus">Ccel_3491</name>
</gene>
<keyword id="KW-1185">Reference proteome</keyword>
<keyword id="KW-0687">Ribonucleoprotein</keyword>
<keyword id="KW-0689">Ribosomal protein</keyword>
<sequence length="44" mass="5348">MLRTYQPKKRHAKKEHGFRKRMSTSNGRKVLRRRRLKGRKVLSA</sequence>
<name>RL34_RUMCH</name>
<organism>
    <name type="scientific">Ruminiclostridium cellulolyticum (strain ATCC 35319 / DSM 5812 / JCM 6584 / H10)</name>
    <name type="common">Clostridium cellulolyticum</name>
    <dbReference type="NCBI Taxonomy" id="394503"/>
    <lineage>
        <taxon>Bacteria</taxon>
        <taxon>Bacillati</taxon>
        <taxon>Bacillota</taxon>
        <taxon>Clostridia</taxon>
        <taxon>Eubacteriales</taxon>
        <taxon>Oscillospiraceae</taxon>
        <taxon>Ruminiclostridium</taxon>
    </lineage>
</organism>
<evidence type="ECO:0000255" key="1">
    <source>
        <dbReference type="HAMAP-Rule" id="MF_00391"/>
    </source>
</evidence>
<evidence type="ECO:0000256" key="2">
    <source>
        <dbReference type="SAM" id="MobiDB-lite"/>
    </source>
</evidence>
<evidence type="ECO:0000305" key="3"/>
<feature type="chain" id="PRO_1000134435" description="Large ribosomal subunit protein bL34">
    <location>
        <begin position="1"/>
        <end position="44"/>
    </location>
</feature>
<feature type="region of interest" description="Disordered" evidence="2">
    <location>
        <begin position="1"/>
        <end position="44"/>
    </location>
</feature>
<feature type="compositionally biased region" description="Basic residues" evidence="2">
    <location>
        <begin position="1"/>
        <end position="22"/>
    </location>
</feature>
<feature type="compositionally biased region" description="Basic residues" evidence="2">
    <location>
        <begin position="29"/>
        <end position="44"/>
    </location>
</feature>
<reference key="1">
    <citation type="submission" date="2009-01" db="EMBL/GenBank/DDBJ databases">
        <title>Complete sequence of Clostridium cellulolyticum H10.</title>
        <authorList>
            <consortium name="US DOE Joint Genome Institute"/>
            <person name="Lucas S."/>
            <person name="Copeland A."/>
            <person name="Lapidus A."/>
            <person name="Glavina del Rio T."/>
            <person name="Dalin E."/>
            <person name="Tice H."/>
            <person name="Bruce D."/>
            <person name="Goodwin L."/>
            <person name="Pitluck S."/>
            <person name="Chertkov O."/>
            <person name="Saunders E."/>
            <person name="Brettin T."/>
            <person name="Detter J.C."/>
            <person name="Han C."/>
            <person name="Larimer F."/>
            <person name="Land M."/>
            <person name="Hauser L."/>
            <person name="Kyrpides N."/>
            <person name="Ivanova N."/>
            <person name="Zhou J."/>
            <person name="Richardson P."/>
        </authorList>
    </citation>
    <scope>NUCLEOTIDE SEQUENCE [LARGE SCALE GENOMIC DNA]</scope>
    <source>
        <strain>ATCC 35319 / DSM 5812 / JCM 6584 / H10</strain>
    </source>
</reference>
<dbReference type="EMBL" id="CP001348">
    <property type="protein sequence ID" value="ACL77778.1"/>
    <property type="molecule type" value="Genomic_DNA"/>
</dbReference>
<dbReference type="RefSeq" id="WP_004619013.1">
    <property type="nucleotide sequence ID" value="NC_011898.1"/>
</dbReference>
<dbReference type="SMR" id="B8I2B5"/>
<dbReference type="STRING" id="394503.Ccel_3491"/>
<dbReference type="KEGG" id="cce:Ccel_3491"/>
<dbReference type="eggNOG" id="COG0230">
    <property type="taxonomic scope" value="Bacteria"/>
</dbReference>
<dbReference type="HOGENOM" id="CLU_129938_2_0_9"/>
<dbReference type="Proteomes" id="UP000001349">
    <property type="component" value="Chromosome"/>
</dbReference>
<dbReference type="GO" id="GO:1990904">
    <property type="term" value="C:ribonucleoprotein complex"/>
    <property type="evidence" value="ECO:0007669"/>
    <property type="project" value="UniProtKB-KW"/>
</dbReference>
<dbReference type="GO" id="GO:0005840">
    <property type="term" value="C:ribosome"/>
    <property type="evidence" value="ECO:0007669"/>
    <property type="project" value="UniProtKB-KW"/>
</dbReference>
<dbReference type="GO" id="GO:0003735">
    <property type="term" value="F:structural constituent of ribosome"/>
    <property type="evidence" value="ECO:0007669"/>
    <property type="project" value="InterPro"/>
</dbReference>
<dbReference type="GO" id="GO:0006412">
    <property type="term" value="P:translation"/>
    <property type="evidence" value="ECO:0007669"/>
    <property type="project" value="UniProtKB-UniRule"/>
</dbReference>
<dbReference type="FunFam" id="1.10.287.3980:FF:000001">
    <property type="entry name" value="Mitochondrial ribosomal protein L34"/>
    <property type="match status" value="1"/>
</dbReference>
<dbReference type="Gene3D" id="1.10.287.3980">
    <property type="match status" value="1"/>
</dbReference>
<dbReference type="HAMAP" id="MF_00391">
    <property type="entry name" value="Ribosomal_bL34"/>
    <property type="match status" value="1"/>
</dbReference>
<dbReference type="InterPro" id="IPR000271">
    <property type="entry name" value="Ribosomal_bL34"/>
</dbReference>
<dbReference type="NCBIfam" id="TIGR01030">
    <property type="entry name" value="rpmH_bact"/>
    <property type="match status" value="1"/>
</dbReference>
<dbReference type="PANTHER" id="PTHR14503:SF4">
    <property type="entry name" value="LARGE RIBOSOMAL SUBUNIT PROTEIN BL34M"/>
    <property type="match status" value="1"/>
</dbReference>
<dbReference type="PANTHER" id="PTHR14503">
    <property type="entry name" value="MITOCHONDRIAL RIBOSOMAL PROTEIN 34 FAMILY MEMBER"/>
    <property type="match status" value="1"/>
</dbReference>
<dbReference type="Pfam" id="PF00468">
    <property type="entry name" value="Ribosomal_L34"/>
    <property type="match status" value="1"/>
</dbReference>
<accession>B8I2B5</accession>
<proteinExistence type="inferred from homology"/>
<protein>
    <recommendedName>
        <fullName evidence="1">Large ribosomal subunit protein bL34</fullName>
    </recommendedName>
    <alternativeName>
        <fullName evidence="3">50S ribosomal protein L34</fullName>
    </alternativeName>
</protein>